<protein>
    <recommendedName>
        <fullName evidence="4">Aquaglyceroporin AqpS</fullName>
    </recommendedName>
</protein>
<sequence>MQEFDLTRRCVAEALGTGLLVAAVVGSGIMADALTADDALALVANTIATGAILVVLVTILGPLSGAHFNPAVSLVFALSGRLTRRDCAAYVIAQVAGAIAGTALAHLMFDLPPLDMSMKVRTGPAQWLSEGVAAFGLVATILAGIRFHREAVPWLVGLYITAAYWFTASTSFANPAVALARSFTNTFSGIRPGDLPGFVIAELLGAVCALALMRWLLQPARPIIRQTSPETAP</sequence>
<keyword id="KW-0059">Arsenical resistance</keyword>
<keyword id="KW-0997">Cell inner membrane</keyword>
<keyword id="KW-1003">Cell membrane</keyword>
<keyword id="KW-0472">Membrane</keyword>
<keyword id="KW-1185">Reference proteome</keyword>
<keyword id="KW-0812">Transmembrane</keyword>
<keyword id="KW-1133">Transmembrane helix</keyword>
<keyword id="KW-0813">Transport</keyword>
<feature type="chain" id="PRO_0000453039" description="Aquaglyceroporin AqpS">
    <location>
        <begin position="1"/>
        <end position="233"/>
    </location>
</feature>
<feature type="transmembrane region" description="Helical" evidence="1">
    <location>
        <begin position="11"/>
        <end position="31"/>
    </location>
</feature>
<feature type="transmembrane region" description="Helical" evidence="1">
    <location>
        <begin position="40"/>
        <end position="60"/>
    </location>
</feature>
<feature type="transmembrane region" description="Helical" evidence="1">
    <location>
        <begin position="89"/>
        <end position="109"/>
    </location>
</feature>
<feature type="transmembrane region" description="Helical" evidence="1">
    <location>
        <begin position="125"/>
        <end position="145"/>
    </location>
</feature>
<feature type="transmembrane region" description="Helical" evidence="1">
    <location>
        <begin position="152"/>
        <end position="172"/>
    </location>
</feature>
<feature type="transmembrane region" description="Helical" evidence="1">
    <location>
        <begin position="193"/>
        <end position="213"/>
    </location>
</feature>
<feature type="short sequence motif" description="NPA 1" evidence="5">
    <location>
        <begin position="69"/>
        <end position="71"/>
    </location>
</feature>
<feature type="short sequence motif" description="NPA 2" evidence="5">
    <location>
        <begin position="174"/>
        <end position="176"/>
    </location>
</feature>
<feature type="mutagenesis site" description="Increases uptake of both methylarsenite and methylarsenate and exhibits higher sensitivity to methylarsenite." evidence="3">
    <original>T</original>
    <variation>F</variation>
    <variation>W</variation>
    <location>
        <position position="49"/>
    </location>
</feature>
<feature type="mutagenesis site" description="Decreases methylarsenite transport activity and results in higher resistance to methylarsenite. Slight decrease in methylarsenate transport activity." evidence="3">
    <original>V</original>
    <variation>I</variation>
    <location>
        <position position="177"/>
    </location>
</feature>
<feature type="mutagenesis site" description="Increases methylarsenite transport activity, leading to lower resistance to methylarsenite. Nearly complete loss of methylarsenate transport activity." evidence="3">
    <original>V</original>
    <variation>R</variation>
    <location>
        <position position="177"/>
    </location>
</feature>
<dbReference type="EMBL" id="AL591688">
    <property type="protein sequence ID" value="CAC45655.1"/>
    <property type="molecule type" value="Genomic_DNA"/>
</dbReference>
<dbReference type="RefSeq" id="NP_385182.1">
    <property type="nucleotide sequence ID" value="NC_003047.1"/>
</dbReference>
<dbReference type="RefSeq" id="WP_010969025.1">
    <property type="nucleotide sequence ID" value="NC_003047.1"/>
</dbReference>
<dbReference type="SMR" id="Q92R43"/>
<dbReference type="TCDB" id="1.A.8.12.10">
    <property type="family name" value="the major intrinsic protein (mip) family"/>
</dbReference>
<dbReference type="EnsemblBacteria" id="CAC45655">
    <property type="protein sequence ID" value="CAC45655"/>
    <property type="gene ID" value="SMc02648"/>
</dbReference>
<dbReference type="KEGG" id="sme:SMc02648"/>
<dbReference type="PATRIC" id="fig|266834.11.peg.2482"/>
<dbReference type="eggNOG" id="COG0580">
    <property type="taxonomic scope" value="Bacteria"/>
</dbReference>
<dbReference type="HOGENOM" id="CLU_020019_8_0_5"/>
<dbReference type="OrthoDB" id="9807293at2"/>
<dbReference type="BioCyc" id="MetaCyc:MONOMER-21671"/>
<dbReference type="Proteomes" id="UP000001976">
    <property type="component" value="Chromosome"/>
</dbReference>
<dbReference type="GO" id="GO:0005886">
    <property type="term" value="C:plasma membrane"/>
    <property type="evidence" value="ECO:0007669"/>
    <property type="project" value="UniProtKB-SubCell"/>
</dbReference>
<dbReference type="GO" id="GO:0015267">
    <property type="term" value="F:channel activity"/>
    <property type="evidence" value="ECO:0007669"/>
    <property type="project" value="InterPro"/>
</dbReference>
<dbReference type="GO" id="GO:0046685">
    <property type="term" value="P:response to arsenic-containing substance"/>
    <property type="evidence" value="ECO:0007669"/>
    <property type="project" value="UniProtKB-KW"/>
</dbReference>
<dbReference type="Gene3D" id="1.20.1080.10">
    <property type="entry name" value="Glycerol uptake facilitator protein"/>
    <property type="match status" value="1"/>
</dbReference>
<dbReference type="InterPro" id="IPR023271">
    <property type="entry name" value="Aquaporin-like"/>
</dbReference>
<dbReference type="InterPro" id="IPR034294">
    <property type="entry name" value="Aquaporin_transptr"/>
</dbReference>
<dbReference type="InterPro" id="IPR000425">
    <property type="entry name" value="MIP"/>
</dbReference>
<dbReference type="PANTHER" id="PTHR45724:SF13">
    <property type="entry name" value="AQUAPORIN NIP1-1-RELATED"/>
    <property type="match status" value="1"/>
</dbReference>
<dbReference type="PANTHER" id="PTHR45724">
    <property type="entry name" value="AQUAPORIN NIP2-1"/>
    <property type="match status" value="1"/>
</dbReference>
<dbReference type="Pfam" id="PF00230">
    <property type="entry name" value="MIP"/>
    <property type="match status" value="1"/>
</dbReference>
<dbReference type="PRINTS" id="PR00783">
    <property type="entry name" value="MINTRINSICP"/>
</dbReference>
<dbReference type="SUPFAM" id="SSF81338">
    <property type="entry name" value="Aquaporin-like"/>
    <property type="match status" value="1"/>
</dbReference>
<organism>
    <name type="scientific">Rhizobium meliloti (strain 1021)</name>
    <name type="common">Ensifer meliloti</name>
    <name type="synonym">Sinorhizobium meliloti</name>
    <dbReference type="NCBI Taxonomy" id="266834"/>
    <lineage>
        <taxon>Bacteria</taxon>
        <taxon>Pseudomonadati</taxon>
        <taxon>Pseudomonadota</taxon>
        <taxon>Alphaproteobacteria</taxon>
        <taxon>Hyphomicrobiales</taxon>
        <taxon>Rhizobiaceae</taxon>
        <taxon>Sinorhizobium/Ensifer group</taxon>
        <taxon>Sinorhizobium</taxon>
    </lineage>
</organism>
<name>AQPS_RHIME</name>
<proteinExistence type="evidence at protein level"/>
<reference key="1">
    <citation type="journal article" date="2001" name="Proc. Natl. Acad. Sci. U.S.A.">
        <title>Analysis of the chromosome sequence of the legume symbiont Sinorhizobium meliloti strain 1021.</title>
        <authorList>
            <person name="Capela D."/>
            <person name="Barloy-Hubler F."/>
            <person name="Gouzy J."/>
            <person name="Bothe G."/>
            <person name="Ampe F."/>
            <person name="Batut J."/>
            <person name="Boistard P."/>
            <person name="Becker A."/>
            <person name="Boutry M."/>
            <person name="Cadieu E."/>
            <person name="Dreano S."/>
            <person name="Gloux S."/>
            <person name="Godrie T."/>
            <person name="Goffeau A."/>
            <person name="Kahn D."/>
            <person name="Kiss E."/>
            <person name="Lelaure V."/>
            <person name="Masuy D."/>
            <person name="Pohl T."/>
            <person name="Portetelle D."/>
            <person name="Puehler A."/>
            <person name="Purnelle B."/>
            <person name="Ramsperger U."/>
            <person name="Renard C."/>
            <person name="Thebault P."/>
            <person name="Vandenbol M."/>
            <person name="Weidner S."/>
            <person name="Galibert F."/>
        </authorList>
    </citation>
    <scope>NUCLEOTIDE SEQUENCE [LARGE SCALE GENOMIC DNA]</scope>
    <source>
        <strain>1021</strain>
    </source>
</reference>
<reference key="2">
    <citation type="journal article" date="2001" name="Science">
        <title>The composite genome of the legume symbiont Sinorhizobium meliloti.</title>
        <authorList>
            <person name="Galibert F."/>
            <person name="Finan T.M."/>
            <person name="Long S.R."/>
            <person name="Puehler A."/>
            <person name="Abola P."/>
            <person name="Ampe F."/>
            <person name="Barloy-Hubler F."/>
            <person name="Barnett M.J."/>
            <person name="Becker A."/>
            <person name="Boistard P."/>
            <person name="Bothe G."/>
            <person name="Boutry M."/>
            <person name="Bowser L."/>
            <person name="Buhrmester J."/>
            <person name="Cadieu E."/>
            <person name="Capela D."/>
            <person name="Chain P."/>
            <person name="Cowie A."/>
            <person name="Davis R.W."/>
            <person name="Dreano S."/>
            <person name="Federspiel N.A."/>
            <person name="Fisher R.F."/>
            <person name="Gloux S."/>
            <person name="Godrie T."/>
            <person name="Goffeau A."/>
            <person name="Golding B."/>
            <person name="Gouzy J."/>
            <person name="Gurjal M."/>
            <person name="Hernandez-Lucas I."/>
            <person name="Hong A."/>
            <person name="Huizar L."/>
            <person name="Hyman R.W."/>
            <person name="Jones T."/>
            <person name="Kahn D."/>
            <person name="Kahn M.L."/>
            <person name="Kalman S."/>
            <person name="Keating D.H."/>
            <person name="Kiss E."/>
            <person name="Komp C."/>
            <person name="Lelaure V."/>
            <person name="Masuy D."/>
            <person name="Palm C."/>
            <person name="Peck M.C."/>
            <person name="Pohl T.M."/>
            <person name="Portetelle D."/>
            <person name="Purnelle B."/>
            <person name="Ramsperger U."/>
            <person name="Surzycki R."/>
            <person name="Thebault P."/>
            <person name="Vandenbol M."/>
            <person name="Vorhoelter F.J."/>
            <person name="Weidner S."/>
            <person name="Wells D.H."/>
            <person name="Wong K."/>
            <person name="Yeh K.-C."/>
            <person name="Batut J."/>
        </authorList>
    </citation>
    <scope>NUCLEOTIDE SEQUENCE [LARGE SCALE GENOMIC DNA]</scope>
    <source>
        <strain>1021</strain>
    </source>
</reference>
<reference key="3">
    <citation type="journal article" date="2005" name="J. Bacteriol.">
        <title>Novel pathway for arsenic detoxification in the legume symbiont Sinorhizobium meliloti.</title>
        <authorList>
            <person name="Yang H.C."/>
            <person name="Cheng J."/>
            <person name="Finan T.M."/>
            <person name="Rosen B.P."/>
            <person name="Bhattacharjee H."/>
        </authorList>
    </citation>
    <scope>FUNCTION</scope>
    <scope>DISRUPTION PHENOTYPE</scope>
    <source>
        <strain>1021</strain>
    </source>
</reference>
<reference key="4">
    <citation type="journal article" date="2021" name="Chemosphere">
        <title>Aquaglyceroporin AqpS from Sinorhizobium meliloti conducts both trivalent and pentavalent methylarsenicals.</title>
        <authorList>
            <person name="Chen J."/>
            <person name="Nadar V.S."/>
            <person name="Rosen B.P."/>
        </authorList>
    </citation>
    <scope>FUNCTION IN TRANSPORT OF METHYLARSENICALS</scope>
    <scope>MUTAGENESIS OF THR-49 AND VAL-177</scope>
    <source>
        <strain>1021</strain>
    </source>
</reference>
<gene>
    <name evidence="4" type="primary">aqpS</name>
    <name evidence="5" type="ordered locus">R01076</name>
    <name evidence="6" type="ORF">SMc02648</name>
</gene>
<evidence type="ECO:0000255" key="1"/>
<evidence type="ECO:0000269" key="2">
    <source>
    </source>
</evidence>
<evidence type="ECO:0000269" key="3">
    <source>
    </source>
</evidence>
<evidence type="ECO:0000303" key="4">
    <source>
    </source>
</evidence>
<evidence type="ECO:0000305" key="5"/>
<evidence type="ECO:0000312" key="6">
    <source>
        <dbReference type="EMBL" id="CAC45655.1"/>
    </source>
</evidence>
<accession>Q92R43</accession>
<comment type="function">
    <text evidence="2 3">Involved in resistance to arsenic. Facilitates efflux of arsenite [As(III)]. Arsenate [As(V)] enters the cell through phosphate transport systems and is reduced to arsenite by the arsenate reductase ArsC. Internally generated arsenite flows out of the cell by downhill movement through AqpS (PubMed:16199569). Can also transport the highly toxic methylarsenite [MAs(III)] and the relatively non-toxic methylarsenate [MAs(V)]. May be a component of an methylarsenite resistance pathway in which methylarsenite enters cells via AqpS, is oxidized by ArsH to methylarsenate, which exits the cells via AqpS. This pathway may confer a selective advantage for R.melliloti to grow in the presence of environmental methylarsenicals (PubMed:33418223).</text>
</comment>
<comment type="subcellular location">
    <subcellularLocation>
        <location evidence="5">Cell inner membrane</location>
        <topology evidence="1">Multi-pass membrane protein</topology>
    </subcellularLocation>
</comment>
<comment type="domain">
    <text evidence="5">Aquaporins contain two tandem repeats each containing three membrane-spanning domains and a pore-forming loop with the signature motif Asn-Pro-Ala (NPA).</text>
</comment>
<comment type="disruption phenotype">
    <text evidence="2">Disruption of the gene results in increased tolerance to arsenite but not arsenate. Does not affect sensitivity to antimonate [Sb(V)].</text>
</comment>
<comment type="similarity">
    <text evidence="5">Belongs to the MIP/aquaporin (TC 1.A.8) family. NIP (TC 1.A.8.12) subfamily.</text>
</comment>